<evidence type="ECO:0000250" key="1"/>
<evidence type="ECO:0000269" key="2">
    <source>
    </source>
</evidence>
<evidence type="ECO:0000305" key="3"/>
<name>HEM3_SCHPO</name>
<gene>
    <name type="primary">hem3</name>
    <name type="ORF">SPAC24B11.13</name>
    <name type="ORF">SPAC806.01</name>
</gene>
<accession>Q09899</accession>
<accession>P78887</accession>
<accession>Q9UT58</accession>
<protein>
    <recommendedName>
        <fullName>Porphobilinogen deaminase</fullName>
        <shortName>PBG</shortName>
        <ecNumber>2.5.1.61</ecNumber>
    </recommendedName>
    <alternativeName>
        <fullName>Hydroxymethylbilane synthase</fullName>
        <shortName>HMBS</shortName>
    </alternativeName>
    <alternativeName>
        <fullName>Pre-uroporphyrinogen synthase</fullName>
    </alternativeName>
</protein>
<sequence>MPSCTSFPIGTRKSKLAVIQSEIIREELEKHYPHLEFPIISRDTIGDEILSKALFEFKRQLAKSLWTRELEALLVTNQCRILVHSLKDLPSEMPDGMVIACIPKRSCPLDAIVFKAGSHYKTVADLPPGSVVGTSSIRRRALLARNFPHLRFVDIRGNVGTRLAKLDAPDSQFDCLVLAAAGLFRLGLKDRIAQMLTAPFVYYAVGQGALAVEVRADDKEMIEMLKPLQHQETLYACLAERALMKRLQGGCAIPIGVQTDVLAISNSSYRISLLGTVLSADGLRAAFGNAEAVVSSEEEAEELGITVALALLKNGAGPILEEHQRSSDSEESLKNY</sequence>
<feature type="chain" id="PRO_0000143043" description="Porphobilinogen deaminase">
    <location>
        <begin position="1"/>
        <end position="336"/>
    </location>
</feature>
<feature type="modified residue" description="S-(dipyrrolylmethanemethyl)cysteine" evidence="1">
    <location>
        <position position="251"/>
    </location>
</feature>
<feature type="modified residue" description="Phosphoserine" evidence="2">
    <location>
        <position position="327"/>
    </location>
</feature>
<feature type="modified residue" description="Phosphoserine" evidence="2">
    <location>
        <position position="329"/>
    </location>
</feature>
<feature type="sequence conflict" description="In Ref. 1; BAA13899." evidence="3" ref="1">
    <original>QSEII</original>
    <variation>HQNY</variation>
    <location>
        <begin position="20"/>
        <end position="24"/>
    </location>
</feature>
<feature type="sequence conflict" description="In Ref. 1; BAA13899." evidence="3" ref="1">
    <original>Y</original>
    <variation>N</variation>
    <location>
        <position position="32"/>
    </location>
</feature>
<feature type="sequence conflict" description="In Ref. 1; BAA13899." evidence="3" ref="1">
    <original>LF</original>
    <variation>WL</variation>
    <location>
        <begin position="54"/>
        <end position="55"/>
    </location>
</feature>
<feature type="sequence conflict" description="In Ref. 1; BAA13899." evidence="3" ref="1">
    <original>MPDGMV</original>
    <variation>NARWYG</variation>
    <location>
        <begin position="93"/>
        <end position="98"/>
    </location>
</feature>
<comment type="function">
    <text evidence="1">Tetrapolymerization of the monopyrrole PBG into the hydroxymethylbilane pre-uroporphyrinogen in several discrete steps.</text>
</comment>
<comment type="catalytic activity">
    <reaction>
        <text>4 porphobilinogen + H2O = hydroxymethylbilane + 4 NH4(+)</text>
        <dbReference type="Rhea" id="RHEA:13185"/>
        <dbReference type="ChEBI" id="CHEBI:15377"/>
        <dbReference type="ChEBI" id="CHEBI:28938"/>
        <dbReference type="ChEBI" id="CHEBI:57845"/>
        <dbReference type="ChEBI" id="CHEBI:58126"/>
        <dbReference type="EC" id="2.5.1.61"/>
    </reaction>
</comment>
<comment type="cofactor">
    <cofactor evidence="1">
        <name>dipyrromethane</name>
        <dbReference type="ChEBI" id="CHEBI:60342"/>
    </cofactor>
    <text evidence="1">Binds 1 dipyrromethane group covalently.</text>
</comment>
<comment type="pathway">
    <text>Porphyrin-containing compound metabolism; protoporphyrin-IX biosynthesis; coproporphyrinogen-III from 5-aminolevulinate: step 2/4.</text>
</comment>
<comment type="miscellaneous">
    <text>The porphobilinogen subunits are added to the dipyrromethan group.</text>
</comment>
<comment type="similarity">
    <text evidence="3">Belongs to the HMBS family.</text>
</comment>
<dbReference type="EC" id="2.5.1.61"/>
<dbReference type="EMBL" id="D89238">
    <property type="protein sequence ID" value="BAA13899.1"/>
    <property type="molecule type" value="mRNA"/>
</dbReference>
<dbReference type="EMBL" id="CU329670">
    <property type="protein sequence ID" value="CAB55280.1"/>
    <property type="molecule type" value="Genomic_DNA"/>
</dbReference>
<dbReference type="PIR" id="T39093">
    <property type="entry name" value="T39093"/>
</dbReference>
<dbReference type="RefSeq" id="NP_001018179.1">
    <property type="nucleotide sequence ID" value="NM_001018252.2"/>
</dbReference>
<dbReference type="SMR" id="Q09899"/>
<dbReference type="BioGRID" id="280459">
    <property type="interactions" value="3"/>
</dbReference>
<dbReference type="FunCoup" id="Q09899">
    <property type="interactions" value="571"/>
</dbReference>
<dbReference type="STRING" id="284812.Q09899"/>
<dbReference type="iPTMnet" id="Q09899"/>
<dbReference type="PaxDb" id="4896-SPAC24B11.13.1"/>
<dbReference type="EnsemblFungi" id="SPAC24B11.13.1">
    <property type="protein sequence ID" value="SPAC24B11.13.1:pep"/>
    <property type="gene ID" value="SPAC24B11.13"/>
</dbReference>
<dbReference type="GeneID" id="3361383"/>
<dbReference type="KEGG" id="spo:3361383"/>
<dbReference type="PomBase" id="SPAC24B11.13">
    <property type="gene designation" value="hem3"/>
</dbReference>
<dbReference type="VEuPathDB" id="FungiDB:SPAC24B11.13"/>
<dbReference type="eggNOG" id="KOG2892">
    <property type="taxonomic scope" value="Eukaryota"/>
</dbReference>
<dbReference type="HOGENOM" id="CLU_019704_0_2_1"/>
<dbReference type="InParanoid" id="Q09899"/>
<dbReference type="OMA" id="LWQANHI"/>
<dbReference type="PhylomeDB" id="Q09899"/>
<dbReference type="Reactome" id="R-SPO-189451">
    <property type="pathway name" value="Heme biosynthesis"/>
</dbReference>
<dbReference type="UniPathway" id="UPA00251">
    <property type="reaction ID" value="UER00319"/>
</dbReference>
<dbReference type="PRO" id="PR:Q09899"/>
<dbReference type="Proteomes" id="UP000002485">
    <property type="component" value="Chromosome I"/>
</dbReference>
<dbReference type="GO" id="GO:0005737">
    <property type="term" value="C:cytoplasm"/>
    <property type="evidence" value="ECO:0007005"/>
    <property type="project" value="PomBase"/>
</dbReference>
<dbReference type="GO" id="GO:0005634">
    <property type="term" value="C:nucleus"/>
    <property type="evidence" value="ECO:0000250"/>
    <property type="project" value="PomBase"/>
</dbReference>
<dbReference type="GO" id="GO:0004418">
    <property type="term" value="F:hydroxymethylbilane synthase activity"/>
    <property type="evidence" value="ECO:0000318"/>
    <property type="project" value="GO_Central"/>
</dbReference>
<dbReference type="GO" id="GO:0006783">
    <property type="term" value="P:heme biosynthetic process"/>
    <property type="evidence" value="ECO:0000318"/>
    <property type="project" value="GO_Central"/>
</dbReference>
<dbReference type="GO" id="GO:0006782">
    <property type="term" value="P:protoporphyrinogen IX biosynthetic process"/>
    <property type="evidence" value="ECO:0007669"/>
    <property type="project" value="UniProtKB-UniPathway"/>
</dbReference>
<dbReference type="CDD" id="cd13645">
    <property type="entry name" value="PBP2_HuPBGD_like"/>
    <property type="match status" value="1"/>
</dbReference>
<dbReference type="FunFam" id="3.40.190.10:FF:000005">
    <property type="entry name" value="Porphobilinogen deaminase"/>
    <property type="match status" value="1"/>
</dbReference>
<dbReference type="FunFam" id="3.40.190.10:FF:000086">
    <property type="entry name" value="Probable porphobilinogen deaminase"/>
    <property type="match status" value="1"/>
</dbReference>
<dbReference type="Gene3D" id="3.40.190.10">
    <property type="entry name" value="Periplasmic binding protein-like II"/>
    <property type="match status" value="2"/>
</dbReference>
<dbReference type="Gene3D" id="3.30.160.40">
    <property type="entry name" value="Porphobilinogen deaminase, C-terminal domain"/>
    <property type="match status" value="1"/>
</dbReference>
<dbReference type="InterPro" id="IPR000860">
    <property type="entry name" value="HemC"/>
</dbReference>
<dbReference type="InterPro" id="IPR022419">
    <property type="entry name" value="Porphobilin_deaminase_cofac_BS"/>
</dbReference>
<dbReference type="InterPro" id="IPR022417">
    <property type="entry name" value="Porphobilin_deaminase_N"/>
</dbReference>
<dbReference type="InterPro" id="IPR022418">
    <property type="entry name" value="Porphobilinogen_deaminase_C"/>
</dbReference>
<dbReference type="InterPro" id="IPR036803">
    <property type="entry name" value="Porphobilinogen_deaminase_C_sf"/>
</dbReference>
<dbReference type="NCBIfam" id="TIGR00212">
    <property type="entry name" value="hemC"/>
    <property type="match status" value="1"/>
</dbReference>
<dbReference type="PANTHER" id="PTHR11557">
    <property type="entry name" value="PORPHOBILINOGEN DEAMINASE"/>
    <property type="match status" value="1"/>
</dbReference>
<dbReference type="PANTHER" id="PTHR11557:SF0">
    <property type="entry name" value="PORPHOBILINOGEN DEAMINASE"/>
    <property type="match status" value="1"/>
</dbReference>
<dbReference type="Pfam" id="PF01379">
    <property type="entry name" value="Porphobil_deam"/>
    <property type="match status" value="1"/>
</dbReference>
<dbReference type="Pfam" id="PF03900">
    <property type="entry name" value="Porphobil_deamC"/>
    <property type="match status" value="1"/>
</dbReference>
<dbReference type="PIRSF" id="PIRSF001438">
    <property type="entry name" value="4pyrrol_synth_OHMeBilane_synth"/>
    <property type="match status" value="1"/>
</dbReference>
<dbReference type="PRINTS" id="PR00151">
    <property type="entry name" value="PORPHBDMNASE"/>
</dbReference>
<dbReference type="SUPFAM" id="SSF53850">
    <property type="entry name" value="Periplasmic binding protein-like II"/>
    <property type="match status" value="1"/>
</dbReference>
<dbReference type="SUPFAM" id="SSF54782">
    <property type="entry name" value="Porphobilinogen deaminase (hydroxymethylbilane synthase), C-terminal domain"/>
    <property type="match status" value="1"/>
</dbReference>
<dbReference type="PROSITE" id="PS00533">
    <property type="entry name" value="PORPHOBILINOGEN_DEAM"/>
    <property type="match status" value="1"/>
</dbReference>
<organism>
    <name type="scientific">Schizosaccharomyces pombe (strain 972 / ATCC 24843)</name>
    <name type="common">Fission yeast</name>
    <dbReference type="NCBI Taxonomy" id="284812"/>
    <lineage>
        <taxon>Eukaryota</taxon>
        <taxon>Fungi</taxon>
        <taxon>Dikarya</taxon>
        <taxon>Ascomycota</taxon>
        <taxon>Taphrinomycotina</taxon>
        <taxon>Schizosaccharomycetes</taxon>
        <taxon>Schizosaccharomycetales</taxon>
        <taxon>Schizosaccharomycetaceae</taxon>
        <taxon>Schizosaccharomyces</taxon>
    </lineage>
</organism>
<keyword id="KW-0350">Heme biosynthesis</keyword>
<keyword id="KW-0597">Phosphoprotein</keyword>
<keyword id="KW-0627">Porphyrin biosynthesis</keyword>
<keyword id="KW-1185">Reference proteome</keyword>
<keyword id="KW-0808">Transferase</keyword>
<proteinExistence type="evidence at protein level"/>
<reference key="1">
    <citation type="journal article" date="1997" name="DNA Res.">
        <title>Identification of open reading frames in Schizosaccharomyces pombe cDNAs.</title>
        <authorList>
            <person name="Yoshioka S."/>
            <person name="Kato K."/>
            <person name="Nakai K."/>
            <person name="Okayama H."/>
            <person name="Nojima H."/>
        </authorList>
    </citation>
    <scope>NUCLEOTIDE SEQUENCE [LARGE SCALE MRNA]</scope>
    <source>
        <strain>PR745</strain>
    </source>
</reference>
<reference key="2">
    <citation type="journal article" date="2002" name="Nature">
        <title>The genome sequence of Schizosaccharomyces pombe.</title>
        <authorList>
            <person name="Wood V."/>
            <person name="Gwilliam R."/>
            <person name="Rajandream M.A."/>
            <person name="Lyne M.H."/>
            <person name="Lyne R."/>
            <person name="Stewart A."/>
            <person name="Sgouros J.G."/>
            <person name="Peat N."/>
            <person name="Hayles J."/>
            <person name="Baker S.G."/>
            <person name="Basham D."/>
            <person name="Bowman S."/>
            <person name="Brooks K."/>
            <person name="Brown D."/>
            <person name="Brown S."/>
            <person name="Chillingworth T."/>
            <person name="Churcher C.M."/>
            <person name="Collins M."/>
            <person name="Connor R."/>
            <person name="Cronin A."/>
            <person name="Davis P."/>
            <person name="Feltwell T."/>
            <person name="Fraser A."/>
            <person name="Gentles S."/>
            <person name="Goble A."/>
            <person name="Hamlin N."/>
            <person name="Harris D.E."/>
            <person name="Hidalgo J."/>
            <person name="Hodgson G."/>
            <person name="Holroyd S."/>
            <person name="Hornsby T."/>
            <person name="Howarth S."/>
            <person name="Huckle E.J."/>
            <person name="Hunt S."/>
            <person name="Jagels K."/>
            <person name="James K.D."/>
            <person name="Jones L."/>
            <person name="Jones M."/>
            <person name="Leather S."/>
            <person name="McDonald S."/>
            <person name="McLean J."/>
            <person name="Mooney P."/>
            <person name="Moule S."/>
            <person name="Mungall K.L."/>
            <person name="Murphy L.D."/>
            <person name="Niblett D."/>
            <person name="Odell C."/>
            <person name="Oliver K."/>
            <person name="O'Neil S."/>
            <person name="Pearson D."/>
            <person name="Quail M.A."/>
            <person name="Rabbinowitsch E."/>
            <person name="Rutherford K.M."/>
            <person name="Rutter S."/>
            <person name="Saunders D."/>
            <person name="Seeger K."/>
            <person name="Sharp S."/>
            <person name="Skelton J."/>
            <person name="Simmonds M.N."/>
            <person name="Squares R."/>
            <person name="Squares S."/>
            <person name="Stevens K."/>
            <person name="Taylor K."/>
            <person name="Taylor R.G."/>
            <person name="Tivey A."/>
            <person name="Walsh S.V."/>
            <person name="Warren T."/>
            <person name="Whitehead S."/>
            <person name="Woodward J.R."/>
            <person name="Volckaert G."/>
            <person name="Aert R."/>
            <person name="Robben J."/>
            <person name="Grymonprez B."/>
            <person name="Weltjens I."/>
            <person name="Vanstreels E."/>
            <person name="Rieger M."/>
            <person name="Schaefer M."/>
            <person name="Mueller-Auer S."/>
            <person name="Gabel C."/>
            <person name="Fuchs M."/>
            <person name="Duesterhoeft A."/>
            <person name="Fritzc C."/>
            <person name="Holzer E."/>
            <person name="Moestl D."/>
            <person name="Hilbert H."/>
            <person name="Borzym K."/>
            <person name="Langer I."/>
            <person name="Beck A."/>
            <person name="Lehrach H."/>
            <person name="Reinhardt R."/>
            <person name="Pohl T.M."/>
            <person name="Eger P."/>
            <person name="Zimmermann W."/>
            <person name="Wedler H."/>
            <person name="Wambutt R."/>
            <person name="Purnelle B."/>
            <person name="Goffeau A."/>
            <person name="Cadieu E."/>
            <person name="Dreano S."/>
            <person name="Gloux S."/>
            <person name="Lelaure V."/>
            <person name="Mottier S."/>
            <person name="Galibert F."/>
            <person name="Aves S.J."/>
            <person name="Xiang Z."/>
            <person name="Hunt C."/>
            <person name="Moore K."/>
            <person name="Hurst S.M."/>
            <person name="Lucas M."/>
            <person name="Rochet M."/>
            <person name="Gaillardin C."/>
            <person name="Tallada V.A."/>
            <person name="Garzon A."/>
            <person name="Thode G."/>
            <person name="Daga R.R."/>
            <person name="Cruzado L."/>
            <person name="Jimenez J."/>
            <person name="Sanchez M."/>
            <person name="del Rey F."/>
            <person name="Benito J."/>
            <person name="Dominguez A."/>
            <person name="Revuelta J.L."/>
            <person name="Moreno S."/>
            <person name="Armstrong J."/>
            <person name="Forsburg S.L."/>
            <person name="Cerutti L."/>
            <person name="Lowe T."/>
            <person name="McCombie W.R."/>
            <person name="Paulsen I."/>
            <person name="Potashkin J."/>
            <person name="Shpakovski G.V."/>
            <person name="Ussery D."/>
            <person name="Barrell B.G."/>
            <person name="Nurse P."/>
        </authorList>
    </citation>
    <scope>NUCLEOTIDE SEQUENCE [LARGE SCALE GENOMIC DNA]</scope>
    <source>
        <strain>972 / ATCC 24843</strain>
    </source>
</reference>
<reference key="3">
    <citation type="journal article" date="2008" name="J. Proteome Res.">
        <title>Phosphoproteome analysis of fission yeast.</title>
        <authorList>
            <person name="Wilson-Grady J.T."/>
            <person name="Villen J."/>
            <person name="Gygi S.P."/>
        </authorList>
    </citation>
    <scope>PHOSPHORYLATION [LARGE SCALE ANALYSIS] AT SER-327 AND SER-329</scope>
    <scope>IDENTIFICATION BY MASS SPECTROMETRY</scope>
</reference>